<reference key="1">
    <citation type="journal article" date="2005" name="Genome Res.">
        <title>Genome sequence of Blochmannia pennsylvanicus indicates parallel evolutionary trends among bacterial mutualists of insects.</title>
        <authorList>
            <person name="Degnan P.H."/>
            <person name="Lazarus A.B."/>
            <person name="Wernegreen J.J."/>
        </authorList>
    </citation>
    <scope>NUCLEOTIDE SEQUENCE [LARGE SCALE GENOMIC DNA]</scope>
    <source>
        <strain>BPEN</strain>
    </source>
</reference>
<protein>
    <recommendedName>
        <fullName evidence="1">Transcription antitermination protein NusB</fullName>
    </recommendedName>
    <alternativeName>
        <fullName evidence="1">Antitermination factor NusB</fullName>
    </alternativeName>
</protein>
<proteinExistence type="inferred from homology"/>
<gene>
    <name evidence="1" type="primary">nusB</name>
    <name type="ordered locus">BPEN_242</name>
</gene>
<comment type="function">
    <text evidence="1">Involved in transcription antitermination. Required for transcription of ribosomal RNA (rRNA) genes. Binds specifically to the boxA antiterminator sequence of the ribosomal RNA (rrn) operons.</text>
</comment>
<comment type="similarity">
    <text evidence="1">Belongs to the NusB family.</text>
</comment>
<keyword id="KW-1185">Reference proteome</keyword>
<keyword id="KW-0694">RNA-binding</keyword>
<keyword id="KW-0804">Transcription</keyword>
<keyword id="KW-0889">Transcription antitermination</keyword>
<keyword id="KW-0805">Transcription regulation</keyword>
<sequence>MKAISRRRARECTLQALYSWQVSKNDVKEIERYVVTEQDIQDCNISYFHELYIGVISCAEELDKLMIPHLSRNLEKLGYIEHSVLRIALFELTKCNDIPYKVAINEAIELVKIFGAEKSHKFINGVLDKIANQLCVSTNNHIIK</sequence>
<name>NUSB_BLOPB</name>
<evidence type="ECO:0000255" key="1">
    <source>
        <dbReference type="HAMAP-Rule" id="MF_00073"/>
    </source>
</evidence>
<organism>
    <name type="scientific">Blochmanniella pennsylvanica (strain BPEN)</name>
    <dbReference type="NCBI Taxonomy" id="291272"/>
    <lineage>
        <taxon>Bacteria</taxon>
        <taxon>Pseudomonadati</taxon>
        <taxon>Pseudomonadota</taxon>
        <taxon>Gammaproteobacteria</taxon>
        <taxon>Enterobacterales</taxon>
        <taxon>Enterobacteriaceae</taxon>
        <taxon>ant endosymbionts</taxon>
        <taxon>Candidatus Blochmanniella</taxon>
    </lineage>
</organism>
<accession>Q493G9</accession>
<feature type="chain" id="PRO_0000265490" description="Transcription antitermination protein NusB">
    <location>
        <begin position="1"/>
        <end position="144"/>
    </location>
</feature>
<dbReference type="EMBL" id="CP000016">
    <property type="protein sequence ID" value="AAZ40873.1"/>
    <property type="molecule type" value="Genomic_DNA"/>
</dbReference>
<dbReference type="RefSeq" id="WP_011282780.1">
    <property type="nucleotide sequence ID" value="NC_007292.1"/>
</dbReference>
<dbReference type="SMR" id="Q493G9"/>
<dbReference type="STRING" id="291272.BPEN_242"/>
<dbReference type="KEGG" id="bpn:BPEN_242"/>
<dbReference type="eggNOG" id="COG0781">
    <property type="taxonomic scope" value="Bacteria"/>
</dbReference>
<dbReference type="HOGENOM" id="CLU_087843_4_1_6"/>
<dbReference type="OrthoDB" id="9789556at2"/>
<dbReference type="Proteomes" id="UP000007794">
    <property type="component" value="Chromosome"/>
</dbReference>
<dbReference type="GO" id="GO:0005829">
    <property type="term" value="C:cytosol"/>
    <property type="evidence" value="ECO:0007669"/>
    <property type="project" value="TreeGrafter"/>
</dbReference>
<dbReference type="GO" id="GO:0003723">
    <property type="term" value="F:RNA binding"/>
    <property type="evidence" value="ECO:0007669"/>
    <property type="project" value="UniProtKB-UniRule"/>
</dbReference>
<dbReference type="GO" id="GO:0006353">
    <property type="term" value="P:DNA-templated transcription termination"/>
    <property type="evidence" value="ECO:0007669"/>
    <property type="project" value="UniProtKB-UniRule"/>
</dbReference>
<dbReference type="GO" id="GO:0031564">
    <property type="term" value="P:transcription antitermination"/>
    <property type="evidence" value="ECO:0007669"/>
    <property type="project" value="UniProtKB-KW"/>
</dbReference>
<dbReference type="CDD" id="cd00619">
    <property type="entry name" value="Terminator_NusB"/>
    <property type="match status" value="1"/>
</dbReference>
<dbReference type="FunFam" id="1.10.940.10:FF:000001">
    <property type="entry name" value="Transcription antitermination factor NusB"/>
    <property type="match status" value="1"/>
</dbReference>
<dbReference type="Gene3D" id="1.10.940.10">
    <property type="entry name" value="NusB-like"/>
    <property type="match status" value="1"/>
</dbReference>
<dbReference type="HAMAP" id="MF_00073">
    <property type="entry name" value="NusB"/>
    <property type="match status" value="1"/>
</dbReference>
<dbReference type="InterPro" id="IPR035926">
    <property type="entry name" value="NusB-like_sf"/>
</dbReference>
<dbReference type="InterPro" id="IPR011605">
    <property type="entry name" value="NusB_fam"/>
</dbReference>
<dbReference type="InterPro" id="IPR006027">
    <property type="entry name" value="NusB_RsmB_TIM44"/>
</dbReference>
<dbReference type="NCBIfam" id="TIGR01951">
    <property type="entry name" value="nusB"/>
    <property type="match status" value="1"/>
</dbReference>
<dbReference type="PANTHER" id="PTHR11078:SF3">
    <property type="entry name" value="ANTITERMINATION NUSB DOMAIN-CONTAINING PROTEIN"/>
    <property type="match status" value="1"/>
</dbReference>
<dbReference type="PANTHER" id="PTHR11078">
    <property type="entry name" value="N UTILIZATION SUBSTANCE PROTEIN B-RELATED"/>
    <property type="match status" value="1"/>
</dbReference>
<dbReference type="Pfam" id="PF01029">
    <property type="entry name" value="NusB"/>
    <property type="match status" value="1"/>
</dbReference>
<dbReference type="SUPFAM" id="SSF48013">
    <property type="entry name" value="NusB-like"/>
    <property type="match status" value="1"/>
</dbReference>